<proteinExistence type="evidence at protein level"/>
<evidence type="ECO:0000250" key="1"/>
<evidence type="ECO:0000250" key="2">
    <source>
        <dbReference type="UniProtKB" id="P07293"/>
    </source>
</evidence>
<evidence type="ECO:0000250" key="3">
    <source>
        <dbReference type="UniProtKB" id="Q01668"/>
    </source>
</evidence>
<evidence type="ECO:0000255" key="4"/>
<evidence type="ECO:0000256" key="5">
    <source>
        <dbReference type="SAM" id="MobiDB-lite"/>
    </source>
</evidence>
<evidence type="ECO:0000269" key="6">
    <source>
    </source>
</evidence>
<evidence type="ECO:0000303" key="7">
    <source>
    </source>
</evidence>
<evidence type="ECO:0000305" key="8"/>
<sequence length="2190" mass="249344">MQHHQQQQPEQHPEEANYASSTRIPLPGDGPTTQSNSSAPSKQTVLSWQAAIDAARQAKAAQNMNTTTAQPVGSLSQRKRQQYAKSKKQGNTSNSRPPRALFCLSLNNPIRRACISLVEWKPFDIFILLSIFANCVALAVYIPFPEDDSNSTNHNLEKVEYAFLIIFTVETFLKIIAYGLLLHPNAYVRNGWNLLDFVIVVVGLFSVILEQLTKETEGGSHSGGKPGGFDVKALRAFRVLRPLRLVSGVPSLQVVLNSIIKAMVPLLHIALLVLFVIIIYAIIGLELFIGKMHKSCFLIDSDILVEEDPAPCAFSGNGRQCVMNGTECKGGWVGPNGGITNFDNFAFAMLTVFQCITMEGWTDVLYWVNDAIGCEWPWIYFVSLIILGSFFVLNLVLGVLSGEFSKEREKAKARGDFQKLREKQQLEEDLKGYLDWITQAEDIDPENDEEADEEGKRNRVTLADLMEEKKKSRLSCFGRSSNKHASMPTSETESVNTENVSGEGENPACCGSLCQTISKSKFSRRWRRWNRFNRRKCRAAVKSVTFYWLVIVLVFLNTLTISSEHYNQPDWLTQIQDIANKVLLALFTCEMLVKMYSLGLQAYFVSLFNRFDCFVVCGGIVETILVELEIMSPLGISVFRCVRLLRIFKVTRHWASLSNLVASLLNSMKSIASLLLLLFLFIIIFSLLGMQLFGGKFNFDETQTKRSTFDNFPQALLTVFQILTGEDWNAVMYDGIMAYGGPSSSGMIVCIYFIILFICGNYILLNVFLAIAVDNLADAESLNTAQKEEAEEKERKKNARKESLENKKSEKSEGDQKKPKDSKVTIAEYGEGEDEDKDPYPPCDVPVGEDEEDEEDEPEVPAGPRPRRISELNMKEKITPIPEGSAFFIFSSTNPIRVGCHRLINHHIFTNLILVFIMLSSVSLAAEDPIRSHSFRNNILGYADYVFTSMFTFEIILKMTAFGAFLHKGSFCRNYFNLLDLLVVGVSLVSFGIQSSAISVVKILRVLRVLRPLRAINRAKGLKHVVQCVFVAIRTIGNIMIVTTLLQFMFACIGVQLFKGKFYKCTDEAKQNPEECRGIYIVYKDGDVDNPMVKERVWQNSDFNFDNVLSAMMALFTVSTFEGWPALLYKAIDSNGENVGPVYNYRVEISIFFIIYIIIIAFFMMNIFVGFVIVTFQEQGEQEYKNCELDKNQRQCVEYALKARPLRRYIPKNPYQYKFWYVVNSTGFEYIMFVLIMLNTLCLAMQHYGQSKLFNDAMDIMNMVFTGVFTVEMVLKLIAFKPKIFVRKKERWLGYFSDAWNTFDSLIVIGSIVDVVLSEADPKPTETVTTDESGNSEDSARISITFFRLFRVMRLVKLLSRGEGIRTLLWTFIKSFQALPYVALLIAMLFFIYAVIGMQVFGKVAMRDNNQINRNNNFQTFPQAVLLLFRCATGEAWQEIMLACLPGKRCDPESDYNPGEEYTCGSNFAIIYFISFYMLCAFLIINLFVAVIMDNFDYLTRDWSILGPHHLDEFKRIWSEYDPEAKGRIKHLDVVTLLRRIQPPLGFGKLCPHRVACKRLVAMNMPLNSDGTVMFNATLFALVRTALKIKTEGNLEQANEELRAVIKKIWKKTSMKLLDQVVPPAGDDEVTVGKFYATFLIQDYFRKFKKRKEQGLVGKYPAKNTTIALQAGLRTLHDIGPEIRRAISCDLQDDEPEENNPDEEEEVYKRNGALFGNHINHISSDRRDSFQQINTTHRPLHVQRPSIPSASDTEKNIYPHTGNSVYHNHHNHNSVGKQVPNSTNANLNNANVSKVVHGKHANFGSHEHRSENGYHSYSRADHEKRRRPSSRRTRYYETYIRSDSGDGRRPTICREERDIRDYCNDDHYLGEQEYYSGEEYYEEDSMLSGNRHVYDYHCRHHCHDSDFERPKGYHHPHGFFEEDDSQTCYDTKRSPRRRLLPPTPASNRRSSFNFECLRRQSSQDDIPLSPNFHHRTALPLHLMQQQVMAVAGLDSSKAHKHSPSRSTRSWATPPATPPNRDHTPYYTPLIQVDRAESTEHMNGSLPSLHRSSWYTDDPDISYRTFTPANLTVPNDFRHKHSDKQRSADSLVEAVLISEGLGRYAKDPKFVSATKHEIADACDMTIDEMESAASNLLNGNISNGTNGDMFPILSRQDYELQDFGPGYSDEEPEPGRYEEDLADEMICITSL</sequence>
<protein>
    <recommendedName>
        <fullName>Voltage-dependent L-type calcium channel subunit alpha-1D</fullName>
    </recommendedName>
    <alternativeName>
        <fullName>CHCACHA1D</fullName>
    </alternativeName>
    <alternativeName>
        <fullName>Voltage-gated calcium channel subunit alpha Cav1.3</fullName>
    </alternativeName>
</protein>
<feature type="chain" id="PRO_0000053937" description="Voltage-dependent L-type calcium channel subunit alpha-1D">
    <location>
        <begin position="1"/>
        <end position="2190"/>
    </location>
</feature>
<feature type="topological domain" description="Cytoplasmic" evidence="4">
    <location>
        <begin position="1"/>
        <end position="121"/>
    </location>
</feature>
<feature type="transmembrane region" description="Helical; Name=S1 of repeat I" evidence="4">
    <location>
        <begin position="122"/>
        <end position="140"/>
    </location>
</feature>
<feature type="topological domain" description="Extracellular" evidence="4">
    <location>
        <begin position="141"/>
        <end position="158"/>
    </location>
</feature>
<feature type="transmembrane region" description="Helical; Name=S2 of repeat I" evidence="4">
    <location>
        <begin position="159"/>
        <end position="178"/>
    </location>
</feature>
<feature type="topological domain" description="Cytoplasmic" evidence="4">
    <location>
        <begin position="179"/>
        <end position="190"/>
    </location>
</feature>
<feature type="transmembrane region" description="Helical; Name=S3 of repeat I" evidence="4">
    <location>
        <begin position="191"/>
        <end position="209"/>
    </location>
</feature>
<feature type="topological domain" description="Extracellular" evidence="4">
    <location>
        <begin position="210"/>
        <end position="230"/>
    </location>
</feature>
<feature type="transmembrane region" description="Helical; Name=S4 of repeat I" evidence="4">
    <location>
        <begin position="231"/>
        <end position="249"/>
    </location>
</feature>
<feature type="topological domain" description="Cytoplasmic" evidence="4">
    <location>
        <begin position="250"/>
        <end position="268"/>
    </location>
</feature>
<feature type="transmembrane region" description="Helical; Name=S5 of repeat I" evidence="4">
    <location>
        <begin position="269"/>
        <end position="288"/>
    </location>
</feature>
<feature type="topological domain" description="Extracellular" evidence="4">
    <location>
        <begin position="289"/>
        <end position="376"/>
    </location>
</feature>
<feature type="transmembrane region" description="Helical; Name=S6 of repeat I" evidence="4">
    <location>
        <begin position="377"/>
        <end position="401"/>
    </location>
</feature>
<feature type="topological domain" description="Cytoplasmic" evidence="4">
    <location>
        <begin position="402"/>
        <end position="544"/>
    </location>
</feature>
<feature type="transmembrane region" description="Helical; Name=S1 of repeat II" evidence="4">
    <location>
        <begin position="545"/>
        <end position="564"/>
    </location>
</feature>
<feature type="topological domain" description="Extracellular" evidence="4">
    <location>
        <begin position="565"/>
        <end position="579"/>
    </location>
</feature>
<feature type="transmembrane region" description="Helical; Name=S2 of repeat II" evidence="4">
    <location>
        <begin position="580"/>
        <end position="598"/>
    </location>
</feature>
<feature type="topological domain" description="Cytoplasmic" evidence="4">
    <location>
        <begin position="599"/>
        <end position="606"/>
    </location>
</feature>
<feature type="transmembrane region" description="Helical; Name=S3 of repeat II" evidence="4">
    <location>
        <begin position="607"/>
        <end position="625"/>
    </location>
</feature>
<feature type="topological domain" description="Extracellular" evidence="4">
    <location>
        <begin position="626"/>
        <end position="635"/>
    </location>
</feature>
<feature type="transmembrane region" description="Helical; Name=S4 of repeat II" evidence="4">
    <location>
        <begin position="636"/>
        <end position="654"/>
    </location>
</feature>
<feature type="topological domain" description="Cytoplasmic" evidence="4">
    <location>
        <begin position="655"/>
        <end position="673"/>
    </location>
</feature>
<feature type="transmembrane region" description="Helical; Name=S5 of repeat II" evidence="4">
    <location>
        <begin position="674"/>
        <end position="694"/>
    </location>
</feature>
<feature type="topological domain" description="Extracellular" evidence="4">
    <location>
        <begin position="695"/>
        <end position="748"/>
    </location>
</feature>
<feature type="transmembrane region" description="Helical; Name=S6 of repeat II" evidence="4">
    <location>
        <begin position="749"/>
        <end position="773"/>
    </location>
</feature>
<feature type="topological domain" description="Cytoplasmic" evidence="4">
    <location>
        <begin position="774"/>
        <end position="907"/>
    </location>
</feature>
<feature type="transmembrane region" description="Helical; Name=S1 of repeat III" evidence="4">
    <location>
        <begin position="908"/>
        <end position="926"/>
    </location>
</feature>
<feature type="topological domain" description="Extracellular" evidence="4">
    <location>
        <begin position="927"/>
        <end position="942"/>
    </location>
</feature>
<feature type="transmembrane region" description="Helical; Name=S2 of repeat III" evidence="4">
    <location>
        <begin position="943"/>
        <end position="962"/>
    </location>
</feature>
<feature type="topological domain" description="Cytoplasmic" evidence="4">
    <location>
        <begin position="963"/>
        <end position="974"/>
    </location>
</feature>
<feature type="transmembrane region" description="Helical; Name=S3 of repeat III" evidence="4">
    <location>
        <begin position="975"/>
        <end position="993"/>
    </location>
</feature>
<feature type="topological domain" description="Extracellular" evidence="4">
    <location>
        <begin position="994"/>
        <end position="999"/>
    </location>
</feature>
<feature type="transmembrane region" description="Helical; Name=S4 of repeat III" evidence="4">
    <location>
        <begin position="1000"/>
        <end position="1019"/>
    </location>
</feature>
<feature type="topological domain" description="Cytoplasmic" evidence="4">
    <location>
        <begin position="1020"/>
        <end position="1038"/>
    </location>
</feature>
<feature type="transmembrane region" description="Helical; Name=S5 of repeat III" evidence="4">
    <location>
        <begin position="1039"/>
        <end position="1058"/>
    </location>
</feature>
<feature type="topological domain" description="Extracellular" evidence="4">
    <location>
        <begin position="1059"/>
        <end position="1148"/>
    </location>
</feature>
<feature type="transmembrane region" description="Helical; Name=S6 of repeat III" evidence="4">
    <location>
        <begin position="1149"/>
        <end position="1169"/>
    </location>
</feature>
<feature type="topological domain" description="Cytoplasmic" evidence="4">
    <location>
        <begin position="1170"/>
        <end position="1226"/>
    </location>
</feature>
<feature type="transmembrane region" description="Helical; Name=S1 of repeat IV" evidence="4">
    <location>
        <begin position="1227"/>
        <end position="1245"/>
    </location>
</feature>
<feature type="topological domain" description="Extracellular" evidence="4">
    <location>
        <begin position="1246"/>
        <end position="1260"/>
    </location>
</feature>
<feature type="transmembrane region" description="Helical; Name=S2 of repeat IV" evidence="4">
    <location>
        <begin position="1261"/>
        <end position="1280"/>
    </location>
</feature>
<feature type="topological domain" description="Cytoplasmic" evidence="4">
    <location>
        <begin position="1281"/>
        <end position="1297"/>
    </location>
</feature>
<feature type="transmembrane region" description="Helical; Name=S3 of repeat IV" evidence="4">
    <location>
        <begin position="1298"/>
        <end position="1319"/>
    </location>
</feature>
<feature type="topological domain" description="Extracellular" evidence="4">
    <location>
        <begin position="1320"/>
        <end position="1342"/>
    </location>
</feature>
<feature type="transmembrane region" description="Helical; Name=S4 of repeat IV" evidence="4">
    <location>
        <begin position="1343"/>
        <end position="1362"/>
    </location>
</feature>
<feature type="topological domain" description="Cytoplasmic" evidence="4">
    <location>
        <begin position="1363"/>
        <end position="1381"/>
    </location>
</feature>
<feature type="transmembrane region" description="Helical; Name=S5 of repeat IV" evidence="4">
    <location>
        <begin position="1382"/>
        <end position="1401"/>
    </location>
</feature>
<feature type="topological domain" description="Extracellular" evidence="4">
    <location>
        <begin position="1402"/>
        <end position="1468"/>
    </location>
</feature>
<feature type="transmembrane region" description="Helical; Name=S6 of repeat IV" evidence="4">
    <location>
        <begin position="1469"/>
        <end position="1493"/>
    </location>
</feature>
<feature type="topological domain" description="Cytoplasmic" evidence="4">
    <location>
        <begin position="1494"/>
        <end position="2190"/>
    </location>
</feature>
<feature type="repeat" description="I">
    <location>
        <begin position="108"/>
        <end position="404"/>
    </location>
</feature>
<feature type="repeat" description="II">
    <location>
        <begin position="530"/>
        <end position="776"/>
    </location>
</feature>
<feature type="repeat" description="III">
    <location>
        <begin position="894"/>
        <end position="1176"/>
    </location>
</feature>
<feature type="repeat" description="IV">
    <location>
        <begin position="1213"/>
        <end position="1496"/>
    </location>
</feature>
<feature type="region of interest" description="Disordered" evidence="5">
    <location>
        <begin position="1"/>
        <end position="44"/>
    </location>
</feature>
<feature type="region of interest" description="Disordered" evidence="5">
    <location>
        <begin position="57"/>
        <end position="96"/>
    </location>
</feature>
<feature type="region of interest" description="Binding to the beta subunit" evidence="1">
    <location>
        <begin position="424"/>
        <end position="441"/>
    </location>
</feature>
<feature type="region of interest" description="Disordered" evidence="5">
    <location>
        <begin position="478"/>
        <end position="500"/>
    </location>
</feature>
<feature type="region of interest" description="Disordered" evidence="5">
    <location>
        <begin position="787"/>
        <end position="869"/>
    </location>
</feature>
<feature type="region of interest" description="Dihydropyridine binding" evidence="1">
    <location>
        <begin position="1096"/>
        <end position="1186"/>
    </location>
</feature>
<feature type="region of interest" description="Dihydropyridine binding" evidence="1">
    <location>
        <begin position="1449"/>
        <end position="1515"/>
    </location>
</feature>
<feature type="region of interest" description="Phenylalkylamine binding" evidence="1">
    <location>
        <begin position="1461"/>
        <end position="1504"/>
    </location>
</feature>
<feature type="region of interest" description="Disordered" evidence="5">
    <location>
        <begin position="1736"/>
        <end position="1787"/>
    </location>
</feature>
<feature type="region of interest" description="Disordered" evidence="5">
    <location>
        <begin position="1803"/>
        <end position="1833"/>
    </location>
</feature>
<feature type="region of interest" description="Disordered" evidence="5">
    <location>
        <begin position="1917"/>
        <end position="1952"/>
    </location>
</feature>
<feature type="region of interest" description="Disordered" evidence="5">
    <location>
        <begin position="1995"/>
        <end position="2025"/>
    </location>
</feature>
<feature type="compositionally biased region" description="Low complexity" evidence="5">
    <location>
        <begin position="1"/>
        <end position="10"/>
    </location>
</feature>
<feature type="compositionally biased region" description="Polar residues" evidence="5">
    <location>
        <begin position="31"/>
        <end position="44"/>
    </location>
</feature>
<feature type="compositionally biased region" description="Polar residues" evidence="5">
    <location>
        <begin position="63"/>
        <end position="76"/>
    </location>
</feature>
<feature type="compositionally biased region" description="Basic residues" evidence="5">
    <location>
        <begin position="77"/>
        <end position="88"/>
    </location>
</feature>
<feature type="compositionally biased region" description="Basic and acidic residues" evidence="5">
    <location>
        <begin position="787"/>
        <end position="823"/>
    </location>
</feature>
<feature type="compositionally biased region" description="Acidic residues" evidence="5">
    <location>
        <begin position="847"/>
        <end position="859"/>
    </location>
</feature>
<feature type="compositionally biased region" description="Basic and acidic residues" evidence="5">
    <location>
        <begin position="1805"/>
        <end position="1823"/>
    </location>
</feature>
<feature type="compositionally biased region" description="Basic residues" evidence="5">
    <location>
        <begin position="1824"/>
        <end position="1833"/>
    </location>
</feature>
<feature type="binding site" evidence="2">
    <location>
        <position position="359"/>
    </location>
    <ligand>
        <name>Ca(2+)</name>
        <dbReference type="ChEBI" id="CHEBI:29108"/>
    </ligand>
</feature>
<feature type="binding site" evidence="2">
    <location>
        <position position="726"/>
    </location>
    <ligand>
        <name>Ca(2+)</name>
        <dbReference type="ChEBI" id="CHEBI:29108"/>
    </ligand>
</feature>
<feature type="binding site" evidence="2">
    <location>
        <position position="1122"/>
    </location>
    <ligand>
        <name>Ca(2+)</name>
        <dbReference type="ChEBI" id="CHEBI:29108"/>
    </ligand>
</feature>
<feature type="glycosylation site" description="N-linked (GlcNAc...) asparagine" evidence="4">
    <location>
        <position position="150"/>
    </location>
</feature>
<feature type="glycosylation site" description="N-linked (GlcNAc...) asparagine" evidence="4">
    <location>
        <position position="324"/>
    </location>
</feature>
<feature type="splice variant" id="VSP_000927" description="In isoform 8." evidence="8">
    <location>
        <begin position="459"/>
        <end position="484"/>
    </location>
</feature>
<feature type="splice variant" id="VSP_000928" description="In isoform 2." evidence="7">
    <original>ILGYADYVFTSMFTFEIILK</original>
    <variation>ILGYFDYAFTAIFTVEILLK</variation>
    <location>
        <begin position="939"/>
        <end position="958"/>
    </location>
</feature>
<feature type="splice variant" id="VSP_000929" description="In isoform 4." evidence="8">
    <location>
        <begin position="1284"/>
        <end position="1293"/>
    </location>
</feature>
<feature type="splice variant" id="VSP_000930" description="In isoform 3." evidence="7">
    <original>GYFSDAWNTFDSLIVIGSIVDVVLSEAD</original>
    <variation>HYFTDAWNTFDALIVVGSVVDIAITEVN</variation>
    <location>
        <begin position="1294"/>
        <end position="1321"/>
    </location>
</feature>
<feature type="splice variant" id="VSP_000931" description="In isoform 5." evidence="7">
    <original>AGLRTLHDIGPEIRRAISCDLQDDEPEENNPDEEE</original>
    <variation>VLIAHTAQTPFCSPASKLFPFGAEAWLQRAAGVA</variation>
    <location>
        <begin position="1671"/>
        <end position="1705"/>
    </location>
</feature>
<feature type="splice variant" id="VSP_000932" description="In isoform 5." evidence="7">
    <location>
        <begin position="1706"/>
        <end position="2190"/>
    </location>
</feature>
<feature type="splice variant" id="VSP_000933" description="In isoform 6." evidence="7">
    <original>RNGALFGNHINHISSDRRD</original>
    <variation>VMSEHGYVIFLLCNMSFIE</variation>
    <location>
        <begin position="1710"/>
        <end position="1728"/>
    </location>
</feature>
<feature type="splice variant" id="VSP_000934" description="In isoform 6." evidence="7">
    <location>
        <begin position="1729"/>
        <end position="2190"/>
    </location>
</feature>
<feature type="splice variant" id="VSP_000935" description="In isoform 7." evidence="8">
    <original>HVY</original>
    <variation>NGP</variation>
    <location>
        <begin position="1892"/>
        <end position="1894"/>
    </location>
</feature>
<feature type="splice variant" id="VSP_000936" description="In isoform 7." evidence="8">
    <location>
        <begin position="1895"/>
        <end position="2190"/>
    </location>
</feature>
<gene>
    <name type="primary">CACNA1D</name>
</gene>
<name>CAC1D_CHICK</name>
<comment type="function">
    <text evidence="3">The isoform alpha-1D gives rise to L-type calcium currents. Long-lasting (L-type) calcium channels belong to the 'high-voltage activated' (HVA) group.</text>
</comment>
<comment type="catalytic activity">
    <reaction evidence="3">
        <text>Ca(2+)(in) = Ca(2+)(out)</text>
        <dbReference type="Rhea" id="RHEA:29671"/>
        <dbReference type="ChEBI" id="CHEBI:29108"/>
    </reaction>
</comment>
<comment type="subunit">
    <text evidence="3 6">Voltage-dependent calcium channels are multisubunit complexes, consisting of alpha-1, alpha-2, beta and delta subunits in a 1:1:1:1 ratio. The channel activity is directed by the pore-forming and voltage-sensitive alpha-1 subunit. In many cases, this subunit is sufficient to generate voltage-sensitive calcium channel activity. The auxiliary subunits beta and alpha-2/delta linked by a disulfide bridge regulate the channel activity (By similarity). Interacts with RIMBP2 (PubMed:11988172).</text>
</comment>
<comment type="subcellular location">
    <subcellularLocation>
        <location evidence="3">Membrane</location>
        <topology evidence="4">Multi-pass membrane protein</topology>
    </subcellularLocation>
</comment>
<comment type="alternative products">
    <event type="alternative splicing"/>
    <isoform>
        <id>O73700-1</id>
        <name>1</name>
        <sequence type="displayed"/>
    </isoform>
    <isoform>
        <id>O73700-2</id>
        <name>2</name>
        <name>IIIS2</name>
        <sequence type="described" ref="VSP_000928"/>
    </isoform>
    <isoform>
        <id>O73700-3</id>
        <name>3</name>
        <name>IVS3</name>
        <sequence type="described" ref="VSP_000930"/>
    </isoform>
    <isoform>
        <id>O73700-4</id>
        <name>4</name>
        <name>IVS2-IVS3</name>
        <sequence type="described" ref="VSP_000929"/>
    </isoform>
    <isoform>
        <id>O73700-5</id>
        <name>5</name>
        <name>PSE29-31-2</name>
        <sequence type="described" ref="VSP_000931 VSP_000932"/>
    </isoform>
    <isoform>
        <id>O73700-6</id>
        <name>6</name>
        <name>PSE29-31-1</name>
        <sequence type="described" ref="VSP_000933 VSP_000934"/>
    </isoform>
    <isoform>
        <id>O73700-7</id>
        <name>7</name>
        <name>PSE48</name>
        <name>154-1</name>
        <sequence type="described" ref="VSP_000935 VSP_000936"/>
    </isoform>
    <isoform>
        <id>O73700-8</id>
        <name>8</name>
        <name>I-II-loop</name>
        <sequence type="described" ref="VSP_000927"/>
    </isoform>
</comment>
<comment type="tissue specificity">
    <text>Expressed in the basilar papilla of the cochlea.</text>
</comment>
<comment type="domain">
    <text>Each of the four internal repeats contains five hydrophobic transmembrane segments (S1, S2, S3, S5, S6) and one positively charged transmembrane segment (S4). S4 segments probably represent the voltage-sensor and are characterized by a series of positively charged amino acids at every third position.</text>
</comment>
<comment type="similarity">
    <text evidence="8">Belongs to the calcium channel alpha-1 subunit (TC 1.A.1.11) family. CACNA1D subfamily.</text>
</comment>
<organism>
    <name type="scientific">Gallus gallus</name>
    <name type="common">Chicken</name>
    <dbReference type="NCBI Taxonomy" id="9031"/>
    <lineage>
        <taxon>Eukaryota</taxon>
        <taxon>Metazoa</taxon>
        <taxon>Chordata</taxon>
        <taxon>Craniata</taxon>
        <taxon>Vertebrata</taxon>
        <taxon>Euteleostomi</taxon>
        <taxon>Archelosauria</taxon>
        <taxon>Archosauria</taxon>
        <taxon>Dinosauria</taxon>
        <taxon>Saurischia</taxon>
        <taxon>Theropoda</taxon>
        <taxon>Coelurosauria</taxon>
        <taxon>Aves</taxon>
        <taxon>Neognathae</taxon>
        <taxon>Galloanserae</taxon>
        <taxon>Galliformes</taxon>
        <taxon>Phasianidae</taxon>
        <taxon>Phasianinae</taxon>
        <taxon>Gallus</taxon>
    </lineage>
</organism>
<reference key="1">
    <citation type="journal article" date="1997" name="Proc. Natl. Acad. Sci. U.S.A.">
        <title>Predominance of the alpha1D subunit in L-type voltage-gated Ca2+ channels of hair cells in the chicken's cochlea.</title>
        <authorList>
            <person name="Kollmar R."/>
            <person name="Montgomery L.G."/>
            <person name="Fak J."/>
            <person name="Henry L.J."/>
            <person name="Hudspeth A.J."/>
        </authorList>
    </citation>
    <scope>NUCLEOTIDE SEQUENCE [MRNA] (ISOFORMS 1; 2; 3; 5 AND 6)</scope>
    <source>
        <tissue>Brain</tissue>
    </source>
</reference>
<reference key="2">
    <citation type="journal article" date="1997" name="Proc. Natl. Acad. Sci. U.S.A.">
        <title>Hair cell-specific splicing of mRNA for the alpha1D subunit of voltage-gated Ca2+ channels in the chicken's cochlea.</title>
        <authorList>
            <person name="Kollmar R."/>
            <person name="Fak J."/>
            <person name="Montgomery L.G."/>
            <person name="Hudspeth A.J."/>
        </authorList>
    </citation>
    <scope>ALTERNATIVE SPLICING</scope>
</reference>
<reference key="3">
    <citation type="journal article" date="2002" name="Neuron">
        <title>RIM binding proteins (RBPs) couple Rab3-interacting molecules (RIMs) to voltage-gated Ca(2+) channels.</title>
        <authorList>
            <person name="Hibino H."/>
            <person name="Pironkova R."/>
            <person name="Onwumere O."/>
            <person name="Vologodskaia M."/>
            <person name="Hudspeth A.J."/>
            <person name="Lesage F."/>
        </authorList>
    </citation>
    <scope>INTERACTION WITH CACNA1D</scope>
</reference>
<accession>O73700</accession>
<accession>O73701</accession>
<accession>O73702</accession>
<accession>O73703</accession>
<accession>O73704</accession>
<dbReference type="EMBL" id="AF027602">
    <property type="protein sequence ID" value="AAC08304.1"/>
    <property type="molecule type" value="mRNA"/>
</dbReference>
<dbReference type="EMBL" id="AF027603">
    <property type="protein sequence ID" value="AAC08305.1"/>
    <property type="molecule type" value="mRNA"/>
</dbReference>
<dbReference type="EMBL" id="AF027604">
    <property type="protein sequence ID" value="AAC08306.1"/>
    <property type="molecule type" value="mRNA"/>
</dbReference>
<dbReference type="EMBL" id="AF027605">
    <property type="protein sequence ID" value="AAC08307.1"/>
    <property type="molecule type" value="mRNA"/>
</dbReference>
<dbReference type="EMBL" id="AF027606">
    <property type="protein sequence ID" value="AAC08308.1"/>
    <property type="molecule type" value="mRNA"/>
</dbReference>
<dbReference type="RefSeq" id="NP_990365.1">
    <molecule id="O73700-1"/>
    <property type="nucleotide sequence ID" value="NM_205034.3"/>
</dbReference>
<dbReference type="SMR" id="O73700"/>
<dbReference type="FunCoup" id="O73700">
    <property type="interactions" value="607"/>
</dbReference>
<dbReference type="STRING" id="9031.ENSGALP00000035486"/>
<dbReference type="GlyCosmos" id="O73700">
    <property type="glycosylation" value="2 sites, No reported glycans"/>
</dbReference>
<dbReference type="GlyGen" id="O73700">
    <property type="glycosylation" value="4 sites"/>
</dbReference>
<dbReference type="PaxDb" id="9031-ENSGALP00000035486"/>
<dbReference type="Ensembl" id="ENSGALT00010067500.1">
    <molecule id="O73700-2"/>
    <property type="protein sequence ID" value="ENSGALP00010041245.1"/>
    <property type="gene ID" value="ENSGALG00010027830.1"/>
</dbReference>
<dbReference type="Ensembl" id="ENSGALT00010067502.1">
    <molecule id="O73700-1"/>
    <property type="protein sequence ID" value="ENSGALP00010041246.1"/>
    <property type="gene ID" value="ENSGALG00010027830.1"/>
</dbReference>
<dbReference type="Ensembl" id="ENSGALT00010067506.1">
    <molecule id="O73700-3"/>
    <property type="protein sequence ID" value="ENSGALP00010041249.1"/>
    <property type="gene ID" value="ENSGALG00010027830.1"/>
</dbReference>
<dbReference type="GeneID" id="395895"/>
<dbReference type="KEGG" id="gga:395895"/>
<dbReference type="CTD" id="776"/>
<dbReference type="VEuPathDB" id="HostDB:geneid_395895"/>
<dbReference type="eggNOG" id="KOG2301">
    <property type="taxonomic scope" value="Eukaryota"/>
</dbReference>
<dbReference type="GeneTree" id="ENSGT00940000154839"/>
<dbReference type="InParanoid" id="O73700"/>
<dbReference type="OrthoDB" id="431720at2759"/>
<dbReference type="PhylomeDB" id="O73700"/>
<dbReference type="Reactome" id="R-GGA-422356">
    <property type="pathway name" value="Regulation of insulin secretion"/>
</dbReference>
<dbReference type="PRO" id="PR:O73700"/>
<dbReference type="Proteomes" id="UP000000539">
    <property type="component" value="Chromosome 12"/>
</dbReference>
<dbReference type="Bgee" id="ENSGALG00000005332">
    <property type="expression patterns" value="Expressed in brain and 6 other cell types or tissues"/>
</dbReference>
<dbReference type="GO" id="GO:1990454">
    <property type="term" value="C:L-type voltage-gated calcium channel complex"/>
    <property type="evidence" value="ECO:0007669"/>
    <property type="project" value="Ensembl"/>
</dbReference>
<dbReference type="GO" id="GO:0005891">
    <property type="term" value="C:voltage-gated calcium channel complex"/>
    <property type="evidence" value="ECO:0000318"/>
    <property type="project" value="GO_Central"/>
</dbReference>
<dbReference type="GO" id="GO:0051393">
    <property type="term" value="F:alpha-actinin binding"/>
    <property type="evidence" value="ECO:0007669"/>
    <property type="project" value="Ensembl"/>
</dbReference>
<dbReference type="GO" id="GO:0008331">
    <property type="term" value="F:high voltage-gated calcium channel activity"/>
    <property type="evidence" value="ECO:0007669"/>
    <property type="project" value="Ensembl"/>
</dbReference>
<dbReference type="GO" id="GO:0046872">
    <property type="term" value="F:metal ion binding"/>
    <property type="evidence" value="ECO:0007669"/>
    <property type="project" value="UniProtKB-KW"/>
</dbReference>
<dbReference type="GO" id="GO:0086059">
    <property type="term" value="F:voltage-gated calcium channel activity involved SA node cell action potential"/>
    <property type="evidence" value="ECO:0007669"/>
    <property type="project" value="Ensembl"/>
</dbReference>
<dbReference type="GO" id="GO:0098703">
    <property type="term" value="P:calcium ion import across plasma membrane"/>
    <property type="evidence" value="ECO:0000318"/>
    <property type="project" value="GO_Central"/>
</dbReference>
<dbReference type="GO" id="GO:0086002">
    <property type="term" value="P:cardiac muscle cell action potential involved in contraction"/>
    <property type="evidence" value="ECO:0007669"/>
    <property type="project" value="Ensembl"/>
</dbReference>
<dbReference type="GO" id="GO:0051928">
    <property type="term" value="P:positive regulation of calcium ion transport"/>
    <property type="evidence" value="ECO:0007669"/>
    <property type="project" value="Ensembl"/>
</dbReference>
<dbReference type="GO" id="GO:0086091">
    <property type="term" value="P:regulation of heart rate by cardiac conduction"/>
    <property type="evidence" value="ECO:0007669"/>
    <property type="project" value="Ensembl"/>
</dbReference>
<dbReference type="GO" id="GO:0007605">
    <property type="term" value="P:sensory perception of sound"/>
    <property type="evidence" value="ECO:0007669"/>
    <property type="project" value="Ensembl"/>
</dbReference>
<dbReference type="FunFam" id="1.10.287.70:FF:000007">
    <property type="entry name" value="Voltage-dependent L-type calcium channel subunit alpha"/>
    <property type="match status" value="1"/>
</dbReference>
<dbReference type="FunFam" id="1.10.287.70:FF:000009">
    <property type="entry name" value="Voltage-dependent L-type calcium channel subunit alpha"/>
    <property type="match status" value="1"/>
</dbReference>
<dbReference type="FunFam" id="1.10.287.70:FF:000021">
    <property type="entry name" value="Voltage-dependent L-type calcium channel subunit alpha"/>
    <property type="match status" value="1"/>
</dbReference>
<dbReference type="FunFam" id="1.20.120.350:FF:000001">
    <property type="entry name" value="Voltage-dependent L-type calcium channel subunit alpha"/>
    <property type="match status" value="1"/>
</dbReference>
<dbReference type="FunFam" id="1.20.120.350:FF:000006">
    <property type="entry name" value="Voltage-dependent L-type calcium channel subunit alpha"/>
    <property type="match status" value="1"/>
</dbReference>
<dbReference type="FunFam" id="1.20.120.350:FF:000010">
    <property type="entry name" value="Voltage-dependent L-type calcium channel subunit alpha"/>
    <property type="match status" value="1"/>
</dbReference>
<dbReference type="FunFam" id="1.20.120.350:FF:000027">
    <property type="entry name" value="Voltage-dependent L-type calcium channel subunit alpha"/>
    <property type="match status" value="1"/>
</dbReference>
<dbReference type="FunFam" id="1.10.238.10:FF:000063">
    <property type="entry name" value="Voltage-dependent N-type calcium channel subunit alpha"/>
    <property type="match status" value="1"/>
</dbReference>
<dbReference type="Gene3D" id="1.10.287.70">
    <property type="match status" value="4"/>
</dbReference>
<dbReference type="Gene3D" id="6.10.250.2180">
    <property type="match status" value="1"/>
</dbReference>
<dbReference type="Gene3D" id="6.10.250.2500">
    <property type="match status" value="1"/>
</dbReference>
<dbReference type="Gene3D" id="1.20.120.350">
    <property type="entry name" value="Voltage-gated potassium channels. Chain C"/>
    <property type="match status" value="4"/>
</dbReference>
<dbReference type="InterPro" id="IPR031688">
    <property type="entry name" value="CAC1F_C"/>
</dbReference>
<dbReference type="InterPro" id="IPR031649">
    <property type="entry name" value="GPHH_dom"/>
</dbReference>
<dbReference type="InterPro" id="IPR005821">
    <property type="entry name" value="Ion_trans_dom"/>
</dbReference>
<dbReference type="InterPro" id="IPR005452">
    <property type="entry name" value="LVDCC_a1dsu"/>
</dbReference>
<dbReference type="InterPro" id="IPR014873">
    <property type="entry name" value="VDCC_a1su_IQ"/>
</dbReference>
<dbReference type="InterPro" id="IPR050599">
    <property type="entry name" value="VDCC_alpha-1_subunit"/>
</dbReference>
<dbReference type="InterPro" id="IPR005446">
    <property type="entry name" value="VDCC_L_a1su"/>
</dbReference>
<dbReference type="InterPro" id="IPR002077">
    <property type="entry name" value="VDCCAlpha1"/>
</dbReference>
<dbReference type="InterPro" id="IPR027359">
    <property type="entry name" value="Volt_channel_dom_sf"/>
</dbReference>
<dbReference type="PANTHER" id="PTHR45628">
    <property type="entry name" value="VOLTAGE-DEPENDENT CALCIUM CHANNEL TYPE A SUBUNIT ALPHA-1"/>
    <property type="match status" value="1"/>
</dbReference>
<dbReference type="PANTHER" id="PTHR45628:SF11">
    <property type="entry name" value="VOLTAGE-DEPENDENT L-TYPE CALCIUM CHANNEL SUBUNIT ALPHA-1D"/>
    <property type="match status" value="1"/>
</dbReference>
<dbReference type="Pfam" id="PF08763">
    <property type="entry name" value="Ca_chan_IQ"/>
    <property type="match status" value="1"/>
</dbReference>
<dbReference type="Pfam" id="PF16885">
    <property type="entry name" value="CAC1F_C"/>
    <property type="match status" value="2"/>
</dbReference>
<dbReference type="Pfam" id="PF16905">
    <property type="entry name" value="GPHH"/>
    <property type="match status" value="1"/>
</dbReference>
<dbReference type="Pfam" id="PF00520">
    <property type="entry name" value="Ion_trans"/>
    <property type="match status" value="4"/>
</dbReference>
<dbReference type="PRINTS" id="PR00167">
    <property type="entry name" value="CACHANNEL"/>
</dbReference>
<dbReference type="PRINTS" id="PR01630">
    <property type="entry name" value="LVDCCALPHA1"/>
</dbReference>
<dbReference type="PRINTS" id="PR01636">
    <property type="entry name" value="LVDCCALPHA1D"/>
</dbReference>
<dbReference type="SMART" id="SM01062">
    <property type="entry name" value="Ca_chan_IQ"/>
    <property type="match status" value="1"/>
</dbReference>
<dbReference type="SUPFAM" id="SSF81324">
    <property type="entry name" value="Voltage-gated potassium channels"/>
    <property type="match status" value="4"/>
</dbReference>
<keyword id="KW-0025">Alternative splicing</keyword>
<keyword id="KW-0106">Calcium</keyword>
<keyword id="KW-0107">Calcium channel</keyword>
<keyword id="KW-0109">Calcium transport</keyword>
<keyword id="KW-1015">Disulfide bond</keyword>
<keyword id="KW-0325">Glycoprotein</keyword>
<keyword id="KW-0407">Ion channel</keyword>
<keyword id="KW-0406">Ion transport</keyword>
<keyword id="KW-0472">Membrane</keyword>
<keyword id="KW-0479">Metal-binding</keyword>
<keyword id="KW-0597">Phosphoprotein</keyword>
<keyword id="KW-1185">Reference proteome</keyword>
<keyword id="KW-0677">Repeat</keyword>
<keyword id="KW-0812">Transmembrane</keyword>
<keyword id="KW-1133">Transmembrane helix</keyword>
<keyword id="KW-0813">Transport</keyword>
<keyword id="KW-0851">Voltage-gated channel</keyword>